<feature type="chain" id="PRO_0000375107" description="B3 domain-containing protein REM13">
    <location>
        <begin position="1"/>
        <end position="1045"/>
    </location>
</feature>
<feature type="DNA-binding region" description="TF-B3 1" evidence="1">
    <location>
        <begin position="7"/>
        <end position="96"/>
    </location>
</feature>
<feature type="DNA-binding region" description="TF-B3 2" evidence="1">
    <location>
        <begin position="157"/>
        <end position="253"/>
    </location>
</feature>
<feature type="DNA-binding region" description="TF-B3 3" evidence="1">
    <location>
        <begin position="305"/>
        <end position="398"/>
    </location>
</feature>
<feature type="DNA-binding region" description="TF-B3 4" evidence="1">
    <location>
        <begin position="474"/>
        <end position="570"/>
    </location>
</feature>
<feature type="DNA-binding region" description="TF-B3 5" evidence="1">
    <location>
        <begin position="643"/>
        <end position="738"/>
    </location>
</feature>
<feature type="DNA-binding region" description="TF-B3 6" evidence="1">
    <location>
        <begin position="815"/>
        <end position="910"/>
    </location>
</feature>
<feature type="DNA-binding region" description="TF-B3 7" evidence="1">
    <location>
        <begin position="940"/>
        <end position="1035"/>
    </location>
</feature>
<feature type="region of interest" description="Disordered" evidence="2">
    <location>
        <begin position="121"/>
        <end position="147"/>
    </location>
</feature>
<feature type="region of interest" description="Disordered" evidence="2">
    <location>
        <begin position="423"/>
        <end position="449"/>
    </location>
</feature>
<feature type="region of interest" description="Disordered" evidence="2">
    <location>
        <begin position="606"/>
        <end position="625"/>
    </location>
</feature>
<feature type="compositionally biased region" description="Basic and acidic residues" evidence="2">
    <location>
        <begin position="130"/>
        <end position="141"/>
    </location>
</feature>
<evidence type="ECO:0000255" key="1">
    <source>
        <dbReference type="PROSITE-ProRule" id="PRU00326"/>
    </source>
</evidence>
<evidence type="ECO:0000256" key="2">
    <source>
        <dbReference type="SAM" id="MobiDB-lite"/>
    </source>
</evidence>
<evidence type="ECO:0000305" key="3"/>
<comment type="subcellular location">
    <subcellularLocation>
        <location evidence="1">Nucleus</location>
    </subcellularLocation>
</comment>
<comment type="sequence caution" evidence="3">
    <conflict type="erroneous gene model prediction">
        <sequence resource="EMBL-CDS" id="AAD23895"/>
    </conflict>
    <text>The predicted gene At2g24650 has been split into 2 genes: At2g24645 and At2g24650.</text>
</comment>
<organism>
    <name type="scientific">Arabidopsis thaliana</name>
    <name type="common">Mouse-ear cress</name>
    <dbReference type="NCBI Taxonomy" id="3702"/>
    <lineage>
        <taxon>Eukaryota</taxon>
        <taxon>Viridiplantae</taxon>
        <taxon>Streptophyta</taxon>
        <taxon>Embryophyta</taxon>
        <taxon>Tracheophyta</taxon>
        <taxon>Spermatophyta</taxon>
        <taxon>Magnoliopsida</taxon>
        <taxon>eudicotyledons</taxon>
        <taxon>Gunneridae</taxon>
        <taxon>Pentapetalae</taxon>
        <taxon>rosids</taxon>
        <taxon>malvids</taxon>
        <taxon>Brassicales</taxon>
        <taxon>Brassicaceae</taxon>
        <taxon>Camelineae</taxon>
        <taxon>Arabidopsis</taxon>
    </lineage>
</organism>
<reference key="1">
    <citation type="journal article" date="1999" name="Nature">
        <title>Sequence and analysis of chromosome 2 of the plant Arabidopsis thaliana.</title>
        <authorList>
            <person name="Lin X."/>
            <person name="Kaul S."/>
            <person name="Rounsley S.D."/>
            <person name="Shea T.P."/>
            <person name="Benito M.-I."/>
            <person name="Town C.D."/>
            <person name="Fujii C.Y."/>
            <person name="Mason T.M."/>
            <person name="Bowman C.L."/>
            <person name="Barnstead M.E."/>
            <person name="Feldblyum T.V."/>
            <person name="Buell C.R."/>
            <person name="Ketchum K.A."/>
            <person name="Lee J.J."/>
            <person name="Ronning C.M."/>
            <person name="Koo H.L."/>
            <person name="Moffat K.S."/>
            <person name="Cronin L.A."/>
            <person name="Shen M."/>
            <person name="Pai G."/>
            <person name="Van Aken S."/>
            <person name="Umayam L."/>
            <person name="Tallon L.J."/>
            <person name="Gill J.E."/>
            <person name="Adams M.D."/>
            <person name="Carrera A.J."/>
            <person name="Creasy T.H."/>
            <person name="Goodman H.M."/>
            <person name="Somerville C.R."/>
            <person name="Copenhaver G.P."/>
            <person name="Preuss D."/>
            <person name="Nierman W.C."/>
            <person name="White O."/>
            <person name="Eisen J.A."/>
            <person name="Salzberg S.L."/>
            <person name="Fraser C.M."/>
            <person name="Venter J.C."/>
        </authorList>
    </citation>
    <scope>NUCLEOTIDE SEQUENCE [LARGE SCALE GENOMIC DNA]</scope>
    <source>
        <strain>cv. Columbia</strain>
    </source>
</reference>
<reference key="2">
    <citation type="journal article" date="2017" name="Plant J.">
        <title>Araport11: a complete reannotation of the Arabidopsis thaliana reference genome.</title>
        <authorList>
            <person name="Cheng C.Y."/>
            <person name="Krishnakumar V."/>
            <person name="Chan A.P."/>
            <person name="Thibaud-Nissen F."/>
            <person name="Schobel S."/>
            <person name="Town C.D."/>
        </authorList>
    </citation>
    <scope>GENOME REANNOTATION</scope>
    <source>
        <strain>cv. Columbia</strain>
    </source>
</reference>
<reference key="3">
    <citation type="journal article" date="2008" name="Trends Plant Sci.">
        <title>The plant B3 superfamily.</title>
        <authorList>
            <person name="Swaminathan K."/>
            <person name="Peterson K."/>
            <person name="Jack T."/>
        </authorList>
    </citation>
    <scope>GENE FAMILY</scope>
</reference>
<name>REM13_ARATH</name>
<protein>
    <recommendedName>
        <fullName>B3 domain-containing protein REM13</fullName>
    </recommendedName>
    <alternativeName>
        <fullName>Protein REPRODUCTIVE MERISTEM 13</fullName>
    </alternativeName>
</protein>
<proteinExistence type="evidence at transcript level"/>
<sequence>MANSRIYPQFFHTLVPSFHTHLMIPEDFFSEYIEGRSVAELKLDFSDKSWEVKLSDRRITDGWEEFVVANDFRIGDVVAFRYVGNLVFHVSNLGPNYYEIEHNDGESLLRKRLHQVDFSSNNGDVCDSEELPKEKKAKTNSEEADAVSSSSSADKSCFMAIITALDLTTDTLYLPLHFTSANGLTRKNREIILTDGGERSRVLDLRFDESSGTFYISRGWRNFCDENGQKAGGFFLFKLVGKGETLVLSFCPTESINGEENITREDSKDECSSLDSLMNIVEKKKYIPKPRGSPYSSYSPSHKQFVTFTLPPDYARIGKLSLSAPFVRENGINKPGEICLLDKHGRKWLTSLLLDSKGTMSLGKGWKEFVKANSLETGFTLKLIWEETTPVLSLCSPESNSDREQEEISKAIEKHSLFIDPSNRDKISNNDKEENMSWERKKDHLKSRDSTLSSQKQFVTITITPSSDRLVSLSNDSCLVVVSLLYFDMRLPKVFTRENGINKPGRITLLGKDGIKQQTNLLFDKANGAMSLGHGWKDFVKDNGLKTGDSFTLKLIWEDQTPVLSLCPADCSIDREAGGGRSETNQKKSLPIEPSTCKKIRKDVNIKDDNSKEKNDKEESKSVDGERKYLRGTYLTPSSQKHFVTLTITPSSIKKDRLILSPQFARKNNIDKPGMIYLLDTDGTKWLISLQRDKKGTMSLGKGWKEFAEANDFKLGESFTMELVWEDTTPMLSLLRTEFRSSKANEKESISSEHKTRESSPTIKNRIVTPALTPEDVKACKLILPSQFMKKIRTVDKERNHLKGRDLNPSCQKQFVTFTITPTCVGKNRLILSAQFARENNINQPGTIYLLDTDGRKWLTTVKRDKKGTMSLGKGWKEFADTKDLKSGDSFTMELIWEDTNPVLSLLRTKFSSSKSNKEESIFLEPKSRDSSSPTIVNRFVTLALTPEDVTACKLILPSQFMKANGINNKLGKITLLGENGVEWPGYMLSLDGTLALGNGWEGFCEANGVKLGQTFTLEFVNEQDTTTTPVLKFSSVETIYKNVN</sequence>
<keyword id="KW-0238">DNA-binding</keyword>
<keyword id="KW-0539">Nucleus</keyword>
<keyword id="KW-1185">Reference proteome</keyword>
<keyword id="KW-0677">Repeat</keyword>
<keyword id="KW-0804">Transcription</keyword>
<keyword id="KW-0805">Transcription regulation</keyword>
<gene>
    <name type="primary">REM13</name>
    <name type="ordered locus">At2g24650</name>
    <name type="ORF">F25P17.5</name>
</gene>
<dbReference type="EMBL" id="AC006954">
    <property type="protein sequence ID" value="AAD23895.1"/>
    <property type="status" value="ALT_SEQ"/>
    <property type="molecule type" value="Genomic_DNA"/>
</dbReference>
<dbReference type="EMBL" id="CP002685">
    <property type="protein sequence ID" value="AEC07610.1"/>
    <property type="molecule type" value="Genomic_DNA"/>
</dbReference>
<dbReference type="PIR" id="C84639">
    <property type="entry name" value="C84639"/>
</dbReference>
<dbReference type="RefSeq" id="NP_180041.5">
    <property type="nucleotide sequence ID" value="NM_128026.6"/>
</dbReference>
<dbReference type="SMR" id="P0CAP5"/>
<dbReference type="FunCoup" id="P0CAP5">
    <property type="interactions" value="385"/>
</dbReference>
<dbReference type="STRING" id="3702.P0CAP5"/>
<dbReference type="PaxDb" id="3702-AT2G24650.1"/>
<dbReference type="EnsemblPlants" id="AT2G24650.1">
    <property type="protein sequence ID" value="AT2G24650.1"/>
    <property type="gene ID" value="AT2G24650"/>
</dbReference>
<dbReference type="GeneID" id="817001"/>
<dbReference type="Gramene" id="AT2G24650.1">
    <property type="protein sequence ID" value="AT2G24650.1"/>
    <property type="gene ID" value="AT2G24650"/>
</dbReference>
<dbReference type="KEGG" id="ath:AT2G24650"/>
<dbReference type="Araport" id="AT2G24650"/>
<dbReference type="TAIR" id="AT2G24650"/>
<dbReference type="HOGENOM" id="CLU_275767_0_0_1"/>
<dbReference type="InParanoid" id="P0CAP5"/>
<dbReference type="PRO" id="PR:P0CAP5"/>
<dbReference type="Proteomes" id="UP000006548">
    <property type="component" value="Chromosome 2"/>
</dbReference>
<dbReference type="ExpressionAtlas" id="P0CAP5">
    <property type="expression patterns" value="baseline and differential"/>
</dbReference>
<dbReference type="GO" id="GO:0005634">
    <property type="term" value="C:nucleus"/>
    <property type="evidence" value="ECO:0007669"/>
    <property type="project" value="UniProtKB-SubCell"/>
</dbReference>
<dbReference type="GO" id="GO:0003677">
    <property type="term" value="F:DNA binding"/>
    <property type="evidence" value="ECO:0007669"/>
    <property type="project" value="UniProtKB-KW"/>
</dbReference>
<dbReference type="CDD" id="cd10017">
    <property type="entry name" value="B3_DNA"/>
    <property type="match status" value="7"/>
</dbReference>
<dbReference type="FunFam" id="2.40.330.10:FF:000009">
    <property type="entry name" value="Transcriptional factor B3 family protein"/>
    <property type="match status" value="1"/>
</dbReference>
<dbReference type="Gene3D" id="2.40.330.10">
    <property type="entry name" value="DNA-binding pseudobarrel domain"/>
    <property type="match status" value="7"/>
</dbReference>
<dbReference type="InterPro" id="IPR003340">
    <property type="entry name" value="B3_DNA-bd"/>
</dbReference>
<dbReference type="InterPro" id="IPR015300">
    <property type="entry name" value="DNA-bd_pseudobarrel_sf"/>
</dbReference>
<dbReference type="InterPro" id="IPR039218">
    <property type="entry name" value="REM_fam"/>
</dbReference>
<dbReference type="PANTHER" id="PTHR31674:SF41">
    <property type="entry name" value="B3 DOMAIN-CONTAINING PROTEIN REM-LIKE 1-RELATED"/>
    <property type="match status" value="1"/>
</dbReference>
<dbReference type="PANTHER" id="PTHR31674">
    <property type="entry name" value="B3 DOMAIN-CONTAINING PROTEIN REM-LIKE 3-RELATED"/>
    <property type="match status" value="1"/>
</dbReference>
<dbReference type="Pfam" id="PF02362">
    <property type="entry name" value="B3"/>
    <property type="match status" value="7"/>
</dbReference>
<dbReference type="SMART" id="SM01019">
    <property type="entry name" value="B3"/>
    <property type="match status" value="7"/>
</dbReference>
<dbReference type="SUPFAM" id="SSF101936">
    <property type="entry name" value="DNA-binding pseudobarrel domain"/>
    <property type="match status" value="7"/>
</dbReference>
<dbReference type="PROSITE" id="PS50863">
    <property type="entry name" value="B3"/>
    <property type="match status" value="7"/>
</dbReference>
<accession>P0CAP5</accession>
<accession>F4IPS4</accession>
<accession>Q9SJA0</accession>